<dbReference type="EMBL" id="AB061860">
    <property type="protein sequence ID" value="BAB79296.1"/>
    <property type="molecule type" value="Genomic_DNA"/>
</dbReference>
<dbReference type="SMR" id="Q8VV01"/>
<dbReference type="STRING" id="1911.GCA_001715295_01863"/>
<dbReference type="GO" id="GO:0005737">
    <property type="term" value="C:cytoplasm"/>
    <property type="evidence" value="ECO:0007669"/>
    <property type="project" value="UniProtKB-SubCell"/>
</dbReference>
<dbReference type="GO" id="GO:0003677">
    <property type="term" value="F:DNA binding"/>
    <property type="evidence" value="ECO:0007669"/>
    <property type="project" value="UniProtKB-KW"/>
</dbReference>
<dbReference type="GO" id="GO:0003700">
    <property type="term" value="F:DNA-binding transcription factor activity"/>
    <property type="evidence" value="ECO:0007669"/>
    <property type="project" value="InterPro"/>
</dbReference>
<dbReference type="GO" id="GO:0045892">
    <property type="term" value="P:negative regulation of DNA-templated transcription"/>
    <property type="evidence" value="ECO:0007669"/>
    <property type="project" value="TreeGrafter"/>
</dbReference>
<dbReference type="CDD" id="cd07377">
    <property type="entry name" value="WHTH_GntR"/>
    <property type="match status" value="1"/>
</dbReference>
<dbReference type="FunFam" id="1.10.10.10:FF:000095">
    <property type="entry name" value="GntR family transcriptional regulator"/>
    <property type="match status" value="1"/>
</dbReference>
<dbReference type="FunFam" id="3.40.1410.10:FF:000001">
    <property type="entry name" value="GntR family transcriptional regulator"/>
    <property type="match status" value="1"/>
</dbReference>
<dbReference type="Gene3D" id="3.40.1410.10">
    <property type="entry name" value="Chorismate lyase-like"/>
    <property type="match status" value="1"/>
</dbReference>
<dbReference type="Gene3D" id="1.10.10.10">
    <property type="entry name" value="Winged helix-like DNA-binding domain superfamily/Winged helix DNA-binding domain"/>
    <property type="match status" value="1"/>
</dbReference>
<dbReference type="InterPro" id="IPR050679">
    <property type="entry name" value="Bact_HTH_transcr_reg"/>
</dbReference>
<dbReference type="InterPro" id="IPR028978">
    <property type="entry name" value="Chorismate_lyase_/UTRA_dom_sf"/>
</dbReference>
<dbReference type="InterPro" id="IPR000524">
    <property type="entry name" value="Tscrpt_reg_HTH_GntR"/>
</dbReference>
<dbReference type="InterPro" id="IPR011663">
    <property type="entry name" value="UTRA"/>
</dbReference>
<dbReference type="InterPro" id="IPR036388">
    <property type="entry name" value="WH-like_DNA-bd_sf"/>
</dbReference>
<dbReference type="InterPro" id="IPR036390">
    <property type="entry name" value="WH_DNA-bd_sf"/>
</dbReference>
<dbReference type="PANTHER" id="PTHR44846">
    <property type="entry name" value="MANNOSYL-D-GLYCERATE TRANSPORT/METABOLISM SYSTEM REPRESSOR MNGR-RELATED"/>
    <property type="match status" value="1"/>
</dbReference>
<dbReference type="PANTHER" id="PTHR44846:SF1">
    <property type="entry name" value="MANNOSYL-D-GLYCERATE TRANSPORT_METABOLISM SYSTEM REPRESSOR MNGR-RELATED"/>
    <property type="match status" value="1"/>
</dbReference>
<dbReference type="Pfam" id="PF00392">
    <property type="entry name" value="GntR"/>
    <property type="match status" value="1"/>
</dbReference>
<dbReference type="Pfam" id="PF07702">
    <property type="entry name" value="UTRA"/>
    <property type="match status" value="1"/>
</dbReference>
<dbReference type="PRINTS" id="PR00035">
    <property type="entry name" value="HTHGNTR"/>
</dbReference>
<dbReference type="SMART" id="SM00345">
    <property type="entry name" value="HTH_GNTR"/>
    <property type="match status" value="1"/>
</dbReference>
<dbReference type="SMART" id="SM00866">
    <property type="entry name" value="UTRA"/>
    <property type="match status" value="1"/>
</dbReference>
<dbReference type="SUPFAM" id="SSF64288">
    <property type="entry name" value="Chorismate lyase-like"/>
    <property type="match status" value="1"/>
</dbReference>
<dbReference type="SUPFAM" id="SSF46785">
    <property type="entry name" value="Winged helix' DNA-binding domain"/>
    <property type="match status" value="1"/>
</dbReference>
<dbReference type="PROSITE" id="PS50949">
    <property type="entry name" value="HTH_GNTR"/>
    <property type="match status" value="1"/>
</dbReference>
<name>DASR_STRGR</name>
<accession>Q8VV01</accession>
<organism>
    <name type="scientific">Streptomyces griseus</name>
    <dbReference type="NCBI Taxonomy" id="1911"/>
    <lineage>
        <taxon>Bacteria</taxon>
        <taxon>Bacillati</taxon>
        <taxon>Actinomycetota</taxon>
        <taxon>Actinomycetes</taxon>
        <taxon>Kitasatosporales</taxon>
        <taxon>Streptomycetaceae</taxon>
        <taxon>Streptomyces</taxon>
    </lineage>
</organism>
<reference key="1">
    <citation type="journal article" date="2002" name="J. Bacteriol.">
        <title>ATP-binding cassette transport system involved in regulation of morphological differentiation in response to glucose in Streptomyces griseus.</title>
        <authorList>
            <person name="Seo J.-W."/>
            <person name="Ohnishi Y."/>
            <person name="Hirata A."/>
            <person name="Horinouchi S."/>
        </authorList>
    </citation>
    <scope>NUCLEOTIDE SEQUENCE [GENOMIC DNA]</scope>
    <scope>INDUCTION</scope>
    <scope>EFFECT ON GLUCOSE-DEPENDENT MORPHOGENESIS</scope>
</reference>
<feature type="chain" id="PRO_0000281409" description="HTH-type transcriptional repressor DasR">
    <location>
        <begin position="1"/>
        <end position="253"/>
    </location>
</feature>
<feature type="domain" description="HTH gntR-type" evidence="2">
    <location>
        <begin position="16"/>
        <end position="86"/>
    </location>
</feature>
<feature type="DNA-binding region" description="H-T-H motif" evidence="2">
    <location>
        <begin position="46"/>
        <end position="65"/>
    </location>
</feature>
<comment type="function">
    <text evidence="1 3">Global regulator that is part of the nutrient-sensing system. In the absence of glucosamine 6-P (GlcN6P), represses the phosphotransferase system (PTS) specific for the uptake of N-acetylglucosamine (PTSNag), and genes involved in the metabolism of chitin, as well as several genes involved in development, thereby linking carbon availability to morphogenesis (By similarity). Regulates the dasABC transport operon involved in glucose-related morphogenesis. Essential for development (PubMed:11741848).</text>
</comment>
<comment type="subcellular location">
    <subcellularLocation>
        <location evidence="4">Cytoplasm</location>
    </subcellularLocation>
</comment>
<comment type="induction">
    <text evidence="3">Actively expressed during vegetative growth.</text>
</comment>
<protein>
    <recommendedName>
        <fullName>HTH-type transcriptional repressor DasR</fullName>
    </recommendedName>
</protein>
<proteinExistence type="evidence at transcript level"/>
<keyword id="KW-0963">Cytoplasm</keyword>
<keyword id="KW-0238">DNA-binding</keyword>
<keyword id="KW-0678">Repressor</keyword>
<keyword id="KW-0804">Transcription</keyword>
<keyword id="KW-0805">Transcription regulation</keyword>
<sequence>MGAEGAVRGARPVPVRAQRVPKYYRLKRHLLDMTDTLPPGTPVPPERTLAAEFDTSRTTVPQALQELVVEGRLERIQGKGTFVAKPKVSQALQLTSYTEDMRAQGLEPTSQLLDIGYVTADDTLAGLLDISTGGRVLRIERLRLASGEPMAIETTHLSAKRFPALRRSLVKYTSLYTALAEVYDVRLAEAEETIETSLATPREAGLLGTDVGLPMLMLSRHSVDGQGEPVEWVRSVYRGDRYKFVARLKRGTD</sequence>
<evidence type="ECO:0000250" key="1">
    <source>
        <dbReference type="UniProtKB" id="Q9K492"/>
    </source>
</evidence>
<evidence type="ECO:0000255" key="2">
    <source>
        <dbReference type="PROSITE-ProRule" id="PRU00307"/>
    </source>
</evidence>
<evidence type="ECO:0000269" key="3">
    <source>
    </source>
</evidence>
<evidence type="ECO:0000305" key="4"/>
<gene>
    <name type="primary">dasR</name>
</gene>